<sequence>MTDSNRDGAAAHSLHAGVYPGNLFMVVAPSGAGKSTLVNALLSKDPEIRLSISYTTRKPRPGEQDGQHYHFTTVEDFRERHARHEFLESAEVHGNYYGTSRVWIEEQMKIGHDVLLEIDWQGAQQVKKQFRNAVGIFILPPSLAALEERLKKRGQDEPNVITRRLLAAGSEIAHAAEAQYVVINETFEHALAELECIVAATRLRFTSQYARHAELFVELGIHLPHAE</sequence>
<protein>
    <recommendedName>
        <fullName evidence="1">Guanylate kinase</fullName>
        <ecNumber evidence="1">2.7.4.8</ecNumber>
    </recommendedName>
    <alternativeName>
        <fullName evidence="1">GMP kinase</fullName>
    </alternativeName>
</protein>
<feature type="chain" id="PRO_0000170513" description="Guanylate kinase">
    <location>
        <begin position="1"/>
        <end position="227"/>
    </location>
</feature>
<feature type="domain" description="Guanylate kinase-like" evidence="1">
    <location>
        <begin position="21"/>
        <end position="199"/>
    </location>
</feature>
<feature type="binding site" evidence="1">
    <location>
        <begin position="28"/>
        <end position="35"/>
    </location>
    <ligand>
        <name>ATP</name>
        <dbReference type="ChEBI" id="CHEBI:30616"/>
    </ligand>
</feature>
<proteinExistence type="inferred from homology"/>
<comment type="function">
    <text evidence="1">Essential for recycling GMP and indirectly, cGMP.</text>
</comment>
<comment type="catalytic activity">
    <reaction evidence="1">
        <text>GMP + ATP = GDP + ADP</text>
        <dbReference type="Rhea" id="RHEA:20780"/>
        <dbReference type="ChEBI" id="CHEBI:30616"/>
        <dbReference type="ChEBI" id="CHEBI:58115"/>
        <dbReference type="ChEBI" id="CHEBI:58189"/>
        <dbReference type="ChEBI" id="CHEBI:456216"/>
        <dbReference type="EC" id="2.7.4.8"/>
    </reaction>
</comment>
<comment type="subcellular location">
    <subcellularLocation>
        <location evidence="1">Cytoplasm</location>
    </subcellularLocation>
</comment>
<comment type="similarity">
    <text evidence="1">Belongs to the guanylate kinase family.</text>
</comment>
<accession>Q62I00</accession>
<name>KGUA_BURMA</name>
<keyword id="KW-0067">ATP-binding</keyword>
<keyword id="KW-0963">Cytoplasm</keyword>
<keyword id="KW-0418">Kinase</keyword>
<keyword id="KW-0547">Nucleotide-binding</keyword>
<keyword id="KW-1185">Reference proteome</keyword>
<keyword id="KW-0808">Transferase</keyword>
<dbReference type="EC" id="2.7.4.8" evidence="1"/>
<dbReference type="EMBL" id="CP000010">
    <property type="protein sequence ID" value="AAU50024.1"/>
    <property type="molecule type" value="Genomic_DNA"/>
</dbReference>
<dbReference type="RefSeq" id="WP_004185877.1">
    <property type="nucleotide sequence ID" value="NC_006348.1"/>
</dbReference>
<dbReference type="RefSeq" id="YP_103670.1">
    <property type="nucleotide sequence ID" value="NC_006348.1"/>
</dbReference>
<dbReference type="SMR" id="Q62I00"/>
<dbReference type="GeneID" id="93061156"/>
<dbReference type="KEGG" id="bma:BMA2096"/>
<dbReference type="PATRIC" id="fig|243160.12.peg.2164"/>
<dbReference type="eggNOG" id="COG0194">
    <property type="taxonomic scope" value="Bacteria"/>
</dbReference>
<dbReference type="HOGENOM" id="CLU_001715_1_0_4"/>
<dbReference type="Proteomes" id="UP000006693">
    <property type="component" value="Chromosome 1"/>
</dbReference>
<dbReference type="GO" id="GO:0005829">
    <property type="term" value="C:cytosol"/>
    <property type="evidence" value="ECO:0007669"/>
    <property type="project" value="TreeGrafter"/>
</dbReference>
<dbReference type="GO" id="GO:0005524">
    <property type="term" value="F:ATP binding"/>
    <property type="evidence" value="ECO:0007669"/>
    <property type="project" value="UniProtKB-UniRule"/>
</dbReference>
<dbReference type="GO" id="GO:0004385">
    <property type="term" value="F:guanylate kinase activity"/>
    <property type="evidence" value="ECO:0007669"/>
    <property type="project" value="UniProtKB-UniRule"/>
</dbReference>
<dbReference type="CDD" id="cd00071">
    <property type="entry name" value="GMPK"/>
    <property type="match status" value="1"/>
</dbReference>
<dbReference type="FunFam" id="3.30.63.10:FF:000002">
    <property type="entry name" value="Guanylate kinase 1"/>
    <property type="match status" value="1"/>
</dbReference>
<dbReference type="Gene3D" id="3.30.63.10">
    <property type="entry name" value="Guanylate Kinase phosphate binding domain"/>
    <property type="match status" value="1"/>
</dbReference>
<dbReference type="Gene3D" id="3.40.50.300">
    <property type="entry name" value="P-loop containing nucleotide triphosphate hydrolases"/>
    <property type="match status" value="1"/>
</dbReference>
<dbReference type="HAMAP" id="MF_00328">
    <property type="entry name" value="Guanylate_kinase"/>
    <property type="match status" value="1"/>
</dbReference>
<dbReference type="InterPro" id="IPR008145">
    <property type="entry name" value="GK/Ca_channel_bsu"/>
</dbReference>
<dbReference type="InterPro" id="IPR008144">
    <property type="entry name" value="Guanylate_kin-like_dom"/>
</dbReference>
<dbReference type="InterPro" id="IPR017665">
    <property type="entry name" value="Guanylate_kinase"/>
</dbReference>
<dbReference type="InterPro" id="IPR020590">
    <property type="entry name" value="Guanylate_kinase_CS"/>
</dbReference>
<dbReference type="InterPro" id="IPR027417">
    <property type="entry name" value="P-loop_NTPase"/>
</dbReference>
<dbReference type="NCBIfam" id="TIGR03263">
    <property type="entry name" value="guanyl_kin"/>
    <property type="match status" value="1"/>
</dbReference>
<dbReference type="PANTHER" id="PTHR23117:SF13">
    <property type="entry name" value="GUANYLATE KINASE"/>
    <property type="match status" value="1"/>
</dbReference>
<dbReference type="PANTHER" id="PTHR23117">
    <property type="entry name" value="GUANYLATE KINASE-RELATED"/>
    <property type="match status" value="1"/>
</dbReference>
<dbReference type="Pfam" id="PF00625">
    <property type="entry name" value="Guanylate_kin"/>
    <property type="match status" value="1"/>
</dbReference>
<dbReference type="SMART" id="SM00072">
    <property type="entry name" value="GuKc"/>
    <property type="match status" value="1"/>
</dbReference>
<dbReference type="SUPFAM" id="SSF52540">
    <property type="entry name" value="P-loop containing nucleoside triphosphate hydrolases"/>
    <property type="match status" value="1"/>
</dbReference>
<dbReference type="PROSITE" id="PS00856">
    <property type="entry name" value="GUANYLATE_KINASE_1"/>
    <property type="match status" value="1"/>
</dbReference>
<dbReference type="PROSITE" id="PS50052">
    <property type="entry name" value="GUANYLATE_KINASE_2"/>
    <property type="match status" value="1"/>
</dbReference>
<reference key="1">
    <citation type="journal article" date="2004" name="Proc. Natl. Acad. Sci. U.S.A.">
        <title>Structural flexibility in the Burkholderia mallei genome.</title>
        <authorList>
            <person name="Nierman W.C."/>
            <person name="DeShazer D."/>
            <person name="Kim H.S."/>
            <person name="Tettelin H."/>
            <person name="Nelson K.E."/>
            <person name="Feldblyum T.V."/>
            <person name="Ulrich R.L."/>
            <person name="Ronning C.M."/>
            <person name="Brinkac L.M."/>
            <person name="Daugherty S.C."/>
            <person name="Davidsen T.D."/>
            <person name="DeBoy R.T."/>
            <person name="Dimitrov G."/>
            <person name="Dodson R.J."/>
            <person name="Durkin A.S."/>
            <person name="Gwinn M.L."/>
            <person name="Haft D.H."/>
            <person name="Khouri H.M."/>
            <person name="Kolonay J.F."/>
            <person name="Madupu R."/>
            <person name="Mohammoud Y."/>
            <person name="Nelson W.C."/>
            <person name="Radune D."/>
            <person name="Romero C.M."/>
            <person name="Sarria S."/>
            <person name="Selengut J."/>
            <person name="Shamblin C."/>
            <person name="Sullivan S.A."/>
            <person name="White O."/>
            <person name="Yu Y."/>
            <person name="Zafar N."/>
            <person name="Zhou L."/>
            <person name="Fraser C.M."/>
        </authorList>
    </citation>
    <scope>NUCLEOTIDE SEQUENCE [LARGE SCALE GENOMIC DNA]</scope>
    <source>
        <strain>ATCC 23344</strain>
    </source>
</reference>
<evidence type="ECO:0000255" key="1">
    <source>
        <dbReference type="HAMAP-Rule" id="MF_00328"/>
    </source>
</evidence>
<gene>
    <name evidence="1" type="primary">gmk</name>
    <name type="ordered locus">BMA2096</name>
</gene>
<organism>
    <name type="scientific">Burkholderia mallei (strain ATCC 23344)</name>
    <dbReference type="NCBI Taxonomy" id="243160"/>
    <lineage>
        <taxon>Bacteria</taxon>
        <taxon>Pseudomonadati</taxon>
        <taxon>Pseudomonadota</taxon>
        <taxon>Betaproteobacteria</taxon>
        <taxon>Burkholderiales</taxon>
        <taxon>Burkholderiaceae</taxon>
        <taxon>Burkholderia</taxon>
        <taxon>pseudomallei group</taxon>
    </lineage>
</organism>